<gene>
    <name evidence="9" type="primary">spr-1</name>
    <name evidence="9" type="synonym">slr-10</name>
    <name evidence="9" type="ORF">D1014.8</name>
</gene>
<accession>Q18919</accession>
<dbReference type="EMBL" id="AF548624">
    <property type="protein sequence ID" value="AAN59932.1"/>
    <property type="molecule type" value="mRNA"/>
</dbReference>
<dbReference type="EMBL" id="AY160228">
    <property type="protein sequence ID" value="AAN62581.1"/>
    <property type="molecule type" value="mRNA"/>
</dbReference>
<dbReference type="EMBL" id="FO080993">
    <property type="protein sequence ID" value="CCD68316.1"/>
    <property type="molecule type" value="Genomic_DNA"/>
</dbReference>
<dbReference type="PIR" id="T29613">
    <property type="entry name" value="T29613"/>
</dbReference>
<dbReference type="PIR" id="T29614">
    <property type="entry name" value="T29614"/>
</dbReference>
<dbReference type="RefSeq" id="NP_505098.1">
    <property type="nucleotide sequence ID" value="NM_072697.5"/>
</dbReference>
<dbReference type="SMR" id="Q18919"/>
<dbReference type="BioGRID" id="44234">
    <property type="interactions" value="5"/>
</dbReference>
<dbReference type="DIP" id="DIP-26333N"/>
<dbReference type="FunCoup" id="Q18919">
    <property type="interactions" value="874"/>
</dbReference>
<dbReference type="IntAct" id="Q18919">
    <property type="interactions" value="2"/>
</dbReference>
<dbReference type="STRING" id="6239.D1014.8.1"/>
<dbReference type="PaxDb" id="6239-D1014.8"/>
<dbReference type="PeptideAtlas" id="Q18919"/>
<dbReference type="EnsemblMetazoa" id="D1014.8.1">
    <property type="protein sequence ID" value="D1014.8.1"/>
    <property type="gene ID" value="WBGene00005006"/>
</dbReference>
<dbReference type="GeneID" id="179192"/>
<dbReference type="KEGG" id="cel:CELE_D1014.8"/>
<dbReference type="UCSC" id="D1014.8">
    <property type="organism name" value="c. elegans"/>
</dbReference>
<dbReference type="AGR" id="WB:WBGene00005006"/>
<dbReference type="CTD" id="179192"/>
<dbReference type="WormBase" id="D1014.8">
    <property type="protein sequence ID" value="CE27749"/>
    <property type="gene ID" value="WBGene00005006"/>
    <property type="gene designation" value="spr-1"/>
</dbReference>
<dbReference type="eggNOG" id="KOG1194">
    <property type="taxonomic scope" value="Eukaryota"/>
</dbReference>
<dbReference type="GeneTree" id="ENSGT00970000196447"/>
<dbReference type="HOGENOM" id="CLU_019480_0_0_1"/>
<dbReference type="InParanoid" id="Q18919"/>
<dbReference type="OMA" id="MCENCGE"/>
<dbReference type="OrthoDB" id="10064338at2759"/>
<dbReference type="PhylomeDB" id="Q18919"/>
<dbReference type="SignaLink" id="Q18919"/>
<dbReference type="PRO" id="PR:Q18919"/>
<dbReference type="Proteomes" id="UP000001940">
    <property type="component" value="Chromosome V"/>
</dbReference>
<dbReference type="Bgee" id="WBGene00005006">
    <property type="expression patterns" value="Expressed in germ line (C elegans) and 4 other cell types or tissues"/>
</dbReference>
<dbReference type="GO" id="GO:0000118">
    <property type="term" value="C:histone deacetylase complex"/>
    <property type="evidence" value="ECO:0000318"/>
    <property type="project" value="GO_Central"/>
</dbReference>
<dbReference type="GO" id="GO:0005667">
    <property type="term" value="C:transcription regulator complex"/>
    <property type="evidence" value="ECO:0000318"/>
    <property type="project" value="GO_Central"/>
</dbReference>
<dbReference type="GO" id="GO:0043565">
    <property type="term" value="F:sequence-specific DNA binding"/>
    <property type="evidence" value="ECO:0007669"/>
    <property type="project" value="InterPro"/>
</dbReference>
<dbReference type="GO" id="GO:0003714">
    <property type="term" value="F:transcription corepressor activity"/>
    <property type="evidence" value="ECO:0000318"/>
    <property type="project" value="GO_Central"/>
</dbReference>
<dbReference type="GO" id="GO:0008270">
    <property type="term" value="F:zinc ion binding"/>
    <property type="evidence" value="ECO:0007669"/>
    <property type="project" value="UniProtKB-KW"/>
</dbReference>
<dbReference type="GO" id="GO:0045892">
    <property type="term" value="P:negative regulation of DNA-templated transcription"/>
    <property type="evidence" value="ECO:0000318"/>
    <property type="project" value="GO_Central"/>
</dbReference>
<dbReference type="GO" id="GO:0006357">
    <property type="term" value="P:regulation of transcription by RNA polymerase II"/>
    <property type="evidence" value="ECO:0000318"/>
    <property type="project" value="GO_Central"/>
</dbReference>
<dbReference type="CDD" id="cd00167">
    <property type="entry name" value="SANT"/>
    <property type="match status" value="1"/>
</dbReference>
<dbReference type="FunFam" id="1.10.10.60:FF:000012">
    <property type="entry name" value="Metastasis-associated 1 family, member 3"/>
    <property type="match status" value="1"/>
</dbReference>
<dbReference type="Gene3D" id="1.20.58.1880">
    <property type="match status" value="1"/>
</dbReference>
<dbReference type="Gene3D" id="4.10.1240.50">
    <property type="match status" value="1"/>
</dbReference>
<dbReference type="Gene3D" id="1.10.10.60">
    <property type="entry name" value="Homeodomain-like"/>
    <property type="match status" value="1"/>
</dbReference>
<dbReference type="InterPro" id="IPR000949">
    <property type="entry name" value="ELM2_dom"/>
</dbReference>
<dbReference type="InterPro" id="IPR009057">
    <property type="entry name" value="Homeodomain-like_sf"/>
</dbReference>
<dbReference type="InterPro" id="IPR001005">
    <property type="entry name" value="SANT/Myb"/>
</dbReference>
<dbReference type="InterPro" id="IPR017884">
    <property type="entry name" value="SANT_dom"/>
</dbReference>
<dbReference type="InterPro" id="IPR051066">
    <property type="entry name" value="Trans_reg/Corepressor"/>
</dbReference>
<dbReference type="InterPro" id="IPR000679">
    <property type="entry name" value="Znf_GATA"/>
</dbReference>
<dbReference type="PANTHER" id="PTHR16089:SF28">
    <property type="entry name" value="REST COREPRESSOR"/>
    <property type="match status" value="1"/>
</dbReference>
<dbReference type="PANTHER" id="PTHR16089">
    <property type="entry name" value="REST COREPRESSOR COREST PROTEIN-RELATED"/>
    <property type="match status" value="1"/>
</dbReference>
<dbReference type="Pfam" id="PF01448">
    <property type="entry name" value="ELM2"/>
    <property type="match status" value="1"/>
</dbReference>
<dbReference type="Pfam" id="PF00249">
    <property type="entry name" value="Myb_DNA-binding"/>
    <property type="match status" value="1"/>
</dbReference>
<dbReference type="SMART" id="SM01189">
    <property type="entry name" value="ELM2"/>
    <property type="match status" value="1"/>
</dbReference>
<dbReference type="SMART" id="SM00717">
    <property type="entry name" value="SANT"/>
    <property type="match status" value="2"/>
</dbReference>
<dbReference type="SUPFAM" id="SSF46689">
    <property type="entry name" value="Homeodomain-like"/>
    <property type="match status" value="2"/>
</dbReference>
<dbReference type="PROSITE" id="PS51156">
    <property type="entry name" value="ELM2"/>
    <property type="match status" value="1"/>
</dbReference>
<dbReference type="PROSITE" id="PS50114">
    <property type="entry name" value="GATA_ZN_FINGER_2"/>
    <property type="match status" value="1"/>
</dbReference>
<dbReference type="PROSITE" id="PS51293">
    <property type="entry name" value="SANT"/>
    <property type="match status" value="2"/>
</dbReference>
<organism>
    <name type="scientific">Caenorhabditis elegans</name>
    <dbReference type="NCBI Taxonomy" id="6239"/>
    <lineage>
        <taxon>Eukaryota</taxon>
        <taxon>Metazoa</taxon>
        <taxon>Ecdysozoa</taxon>
        <taxon>Nematoda</taxon>
        <taxon>Chromadorea</taxon>
        <taxon>Rhabditida</taxon>
        <taxon>Rhabditina</taxon>
        <taxon>Rhabditomorpha</taxon>
        <taxon>Rhabditoidea</taxon>
        <taxon>Rhabditidae</taxon>
        <taxon>Peloderinae</taxon>
        <taxon>Caenorhabditis</taxon>
    </lineage>
</organism>
<reference key="1">
    <citation type="journal article" date="2002" name="Genes Dev.">
        <title>Suppressors of the egg-laying defective phenotype of sel-12 presenilin mutants implicate the CoREST corepressor complex in LIN-12/Notch signaling in C. elegans.</title>
        <authorList>
            <person name="Jarriault S."/>
            <person name="Greenwald I."/>
        </authorList>
    </citation>
    <scope>NUCLEOTIDE SEQUENCE [MRNA]</scope>
    <scope>FUNCTION</scope>
    <scope>SUBCELLULAR LOCATION</scope>
    <source>
        <tissue>Larva</tissue>
    </source>
</reference>
<reference key="2">
    <citation type="journal article" date="2002" name="EMBO J.">
        <title>Loss of spr-5 bypasses the requirement for the C.elegans presenilin sel-12 by derepressing hop-1.</title>
        <authorList>
            <person name="Eimer S."/>
            <person name="Lakowski B."/>
            <person name="Donhauser R."/>
            <person name="Baumeister R."/>
        </authorList>
    </citation>
    <scope>NUCLEOTIDE SEQUENCE [MRNA]</scope>
    <scope>INTERACTION WITH SPR-5</scope>
    <scope>DISRUPTION PHENOTYPE</scope>
    <source>
        <strain>Bristol N2</strain>
    </source>
</reference>
<reference key="3">
    <citation type="journal article" date="1998" name="Science">
        <title>Genome sequence of the nematode C. elegans: a platform for investigating biology.</title>
        <authorList>
            <consortium name="The C. elegans sequencing consortium"/>
        </authorList>
    </citation>
    <scope>NUCLEOTIDE SEQUENCE [LARGE SCALE GENOMIC DNA]</scope>
    <source>
        <strain>Bristol N2</strain>
    </source>
</reference>
<reference key="4">
    <citation type="journal article" date="2007" name="Dev. Biol.">
        <title>lin-35/Rb and the CoREST ortholog spr-1 coordinately regulate vulval morphogenesis and gonad development in C. elegans.</title>
        <authorList>
            <person name="Bender A.M."/>
            <person name="Kirienko N.V."/>
            <person name="Olson S.K."/>
            <person name="Esko J.D."/>
            <person name="Fay D.S."/>
        </authorList>
    </citation>
    <scope>FUNCTION</scope>
    <scope>DISRUPTION PHENOTYPE</scope>
</reference>
<sequence>MDLYDDDGESAQSEKVDVPSEESTIAGPETDIPAETIEENVPEVEENTLLEEDSLVDVDSPRPSQQRSKPSKSKRKRKRSSSGESSAAEPEIDAGAKVKGPLSNTNKEINVGTEFQAKIADLNLNDKACNEDRDDQDELIWNTPETIDDEKLEAFIRESSDRYLIPIDRALYILTINNFNFDSAIAEVARRNELKDVWTDQEITLFENCYQIFGKNFSQIRSALCHRSLQSIVQFYYESKKRVKYLNFVNSKCDDSSSSEETETPSPYPEAIFESMCDNCGEKAENMQINNAMNRPECRACLIYFNQTGVPRPTSLRLVLAERIRNQVSCPDNMKEYMKDFDKLSAQATGSTFQKRIIVKDQCVEYIIDVDKIPSSSCTENGNVGETSSPSAQKTEIQSESDGSGPLIWRHKKTVCMEEIEVLADDSRRKMFEACQHGSKVDIKLVASWKNDMTNLRKRVEQTYYDPDLNPTYLFSHDRVHYSQDWTQLERSQVIRCFNMYGAHFEHIADVIGTKTPDQVYQFYLENQKAIDAADEEFLADMKNPERLADMEEEEDSI</sequence>
<proteinExistence type="evidence at protein level"/>
<name>RCORB_CAEEL</name>
<feature type="chain" id="PRO_0000083507" description="REST corepressor spr-1">
    <location>
        <begin position="1"/>
        <end position="558"/>
    </location>
</feature>
<feature type="domain" description="ELM2" evidence="2">
    <location>
        <begin position="107"/>
        <end position="192"/>
    </location>
</feature>
<feature type="domain" description="SANT 1" evidence="3">
    <location>
        <begin position="193"/>
        <end position="244"/>
    </location>
</feature>
<feature type="domain" description="SANT 2" evidence="3">
    <location>
        <begin position="481"/>
        <end position="532"/>
    </location>
</feature>
<feature type="zinc finger region" description="GATA-type" evidence="1">
    <location>
        <begin position="271"/>
        <end position="325"/>
    </location>
</feature>
<feature type="region of interest" description="Disordered" evidence="4">
    <location>
        <begin position="1"/>
        <end position="106"/>
    </location>
</feature>
<feature type="region of interest" description="Disordered" evidence="4">
    <location>
        <begin position="378"/>
        <end position="406"/>
    </location>
</feature>
<feature type="compositionally biased region" description="Acidic residues" evidence="4">
    <location>
        <begin position="36"/>
        <end position="56"/>
    </location>
</feature>
<feature type="compositionally biased region" description="Basic residues" evidence="4">
    <location>
        <begin position="69"/>
        <end position="80"/>
    </location>
</feature>
<feature type="compositionally biased region" description="Polar residues" evidence="4">
    <location>
        <begin position="378"/>
        <end position="402"/>
    </location>
</feature>
<keyword id="KW-0238">DNA-binding</keyword>
<keyword id="KW-0479">Metal-binding</keyword>
<keyword id="KW-0539">Nucleus</keyword>
<keyword id="KW-1185">Reference proteome</keyword>
<keyword id="KW-0677">Repeat</keyword>
<keyword id="KW-0678">Repressor</keyword>
<keyword id="KW-0804">Transcription</keyword>
<keyword id="KW-0805">Transcription regulation</keyword>
<keyword id="KW-0862">Zinc</keyword>
<keyword id="KW-0863">Zinc-finger</keyword>
<evidence type="ECO:0000255" key="1">
    <source>
        <dbReference type="PROSITE-ProRule" id="PRU00094"/>
    </source>
</evidence>
<evidence type="ECO:0000255" key="2">
    <source>
        <dbReference type="PROSITE-ProRule" id="PRU00512"/>
    </source>
</evidence>
<evidence type="ECO:0000255" key="3">
    <source>
        <dbReference type="PROSITE-ProRule" id="PRU00624"/>
    </source>
</evidence>
<evidence type="ECO:0000256" key="4">
    <source>
        <dbReference type="SAM" id="MobiDB-lite"/>
    </source>
</evidence>
<evidence type="ECO:0000269" key="5">
    <source>
    </source>
</evidence>
<evidence type="ECO:0000269" key="6">
    <source>
    </source>
</evidence>
<evidence type="ECO:0000269" key="7">
    <source>
    </source>
</evidence>
<evidence type="ECO:0000305" key="8"/>
<evidence type="ECO:0000312" key="9">
    <source>
        <dbReference type="WormBase" id="D1014.8"/>
    </source>
</evidence>
<comment type="function">
    <text evidence="5 7">Probable corepressor protein, which probably participates in the transcriptional repression of the presenilin protein hop-1 (PubMed:12381669). Probably acts via the formation of a multiprotein complex that deacetylates and demethylates specific sites on histones (PubMed:12381669). Acts redundantly with the transcriptional repressor lin-35 to play a role in vulval morphogenesis and promote germline proliferation (PubMed:17070797).</text>
</comment>
<comment type="subunit">
    <text evidence="6">Probably part of a large repressor complex. Interacts with histone demethylase spr-5/lsd-1.</text>
</comment>
<comment type="subcellular location">
    <subcellularLocation>
        <location evidence="2 3 5">Nucleus</location>
    </subcellularLocation>
</comment>
<comment type="disruption phenotype">
    <text evidence="6 7">Loss of function results in a suppression of sel-12 mutant phenotypes, possibly by up-regulating hop-1 expression (PubMed:12411496). Double knockout with lin-35 results in defects in growth, vulval morphogenesis, somatic gonad development and fertility (PubMed:17070797).</text>
</comment>
<comment type="similarity">
    <text evidence="8">Belongs to the CoREST family.</text>
</comment>
<protein>
    <recommendedName>
        <fullName>REST corepressor spr-1</fullName>
    </recommendedName>
    <alternativeName>
        <fullName>CoREST</fullName>
    </alternativeName>
    <alternativeName>
        <fullName>Suppressor of presenilin 1</fullName>
    </alternativeName>
</protein>